<name>RUVB_NOCSJ</name>
<reference key="1">
    <citation type="submission" date="2006-12" db="EMBL/GenBank/DDBJ databases">
        <title>Complete sequence of chromosome 1 of Nocardioides sp. JS614.</title>
        <authorList>
            <person name="Copeland A."/>
            <person name="Lucas S."/>
            <person name="Lapidus A."/>
            <person name="Barry K."/>
            <person name="Detter J.C."/>
            <person name="Glavina del Rio T."/>
            <person name="Hammon N."/>
            <person name="Israni S."/>
            <person name="Dalin E."/>
            <person name="Tice H."/>
            <person name="Pitluck S."/>
            <person name="Thompson L.S."/>
            <person name="Brettin T."/>
            <person name="Bruce D."/>
            <person name="Han C."/>
            <person name="Tapia R."/>
            <person name="Schmutz J."/>
            <person name="Larimer F."/>
            <person name="Land M."/>
            <person name="Hauser L."/>
            <person name="Kyrpides N."/>
            <person name="Kim E."/>
            <person name="Mattes T."/>
            <person name="Gossett J."/>
            <person name="Richardson P."/>
        </authorList>
    </citation>
    <scope>NUCLEOTIDE SEQUENCE [LARGE SCALE GENOMIC DNA]</scope>
    <source>
        <strain>ATCC BAA-499 / JS614</strain>
    </source>
</reference>
<accession>A1SJA7</accession>
<comment type="function">
    <text evidence="1">The RuvA-RuvB-RuvC complex processes Holliday junction (HJ) DNA during genetic recombination and DNA repair, while the RuvA-RuvB complex plays an important role in the rescue of blocked DNA replication forks via replication fork reversal (RFR). RuvA specifically binds to HJ cruciform DNA, conferring on it an open structure. The RuvB hexamer acts as an ATP-dependent pump, pulling dsDNA into and through the RuvAB complex. RuvB forms 2 homohexamers on either side of HJ DNA bound by 1 or 2 RuvA tetramers; 4 subunits per hexamer contact DNA at a time. Coordinated motions by a converter formed by DNA-disengaged RuvB subunits stimulates ATP hydrolysis and nucleotide exchange. Immobilization of the converter enables RuvB to convert the ATP-contained energy into a lever motion, pulling 2 nucleotides of DNA out of the RuvA tetramer per ATP hydrolyzed, thus driving DNA branch migration. The RuvB motors rotate together with the DNA substrate, which together with the progressing nucleotide cycle form the mechanistic basis for DNA recombination by continuous HJ branch migration. Branch migration allows RuvC to scan DNA until it finds its consensus sequence, where it cleaves and resolves cruciform DNA.</text>
</comment>
<comment type="catalytic activity">
    <reaction evidence="1">
        <text>ATP + H2O = ADP + phosphate + H(+)</text>
        <dbReference type="Rhea" id="RHEA:13065"/>
        <dbReference type="ChEBI" id="CHEBI:15377"/>
        <dbReference type="ChEBI" id="CHEBI:15378"/>
        <dbReference type="ChEBI" id="CHEBI:30616"/>
        <dbReference type="ChEBI" id="CHEBI:43474"/>
        <dbReference type="ChEBI" id="CHEBI:456216"/>
    </reaction>
</comment>
<comment type="subunit">
    <text evidence="1">Homohexamer. Forms an RuvA(8)-RuvB(12)-Holliday junction (HJ) complex. HJ DNA is sandwiched between 2 RuvA tetramers; dsDNA enters through RuvA and exits via RuvB. An RuvB hexamer assembles on each DNA strand where it exits the tetramer. Each RuvB hexamer is contacted by two RuvA subunits (via domain III) on 2 adjacent RuvB subunits; this complex drives branch migration. In the full resolvosome a probable DNA-RuvA(4)-RuvB(12)-RuvC(2) complex forms which resolves the HJ.</text>
</comment>
<comment type="subcellular location">
    <subcellularLocation>
        <location evidence="1">Cytoplasm</location>
    </subcellularLocation>
</comment>
<comment type="domain">
    <text evidence="1">Has 3 domains, the large (RuvB-L) and small ATPase (RuvB-S) domains and the C-terminal head (RuvB-H) domain. The head domain binds DNA, while the ATPase domains jointly bind ATP, ADP or are empty depending on the state of the subunit in the translocation cycle. During a single DNA translocation step the structure of each domain remains the same, but their relative positions change.</text>
</comment>
<comment type="similarity">
    <text evidence="1">Belongs to the RuvB family.</text>
</comment>
<evidence type="ECO:0000255" key="1">
    <source>
        <dbReference type="HAMAP-Rule" id="MF_00016"/>
    </source>
</evidence>
<proteinExistence type="inferred from homology"/>
<dbReference type="EC" id="3.6.4.-" evidence="1"/>
<dbReference type="EMBL" id="CP000509">
    <property type="protein sequence ID" value="ABL81892.1"/>
    <property type="molecule type" value="Genomic_DNA"/>
</dbReference>
<dbReference type="RefSeq" id="WP_011755833.1">
    <property type="nucleotide sequence ID" value="NC_008699.1"/>
</dbReference>
<dbReference type="SMR" id="A1SJA7"/>
<dbReference type="STRING" id="196162.Noca_2387"/>
<dbReference type="KEGG" id="nca:Noca_2387"/>
<dbReference type="eggNOG" id="COG2255">
    <property type="taxonomic scope" value="Bacteria"/>
</dbReference>
<dbReference type="HOGENOM" id="CLU_055599_1_0_11"/>
<dbReference type="OrthoDB" id="9804478at2"/>
<dbReference type="Proteomes" id="UP000000640">
    <property type="component" value="Chromosome"/>
</dbReference>
<dbReference type="GO" id="GO:0005737">
    <property type="term" value="C:cytoplasm"/>
    <property type="evidence" value="ECO:0007669"/>
    <property type="project" value="UniProtKB-SubCell"/>
</dbReference>
<dbReference type="GO" id="GO:0048476">
    <property type="term" value="C:Holliday junction resolvase complex"/>
    <property type="evidence" value="ECO:0007669"/>
    <property type="project" value="UniProtKB-UniRule"/>
</dbReference>
<dbReference type="GO" id="GO:0005524">
    <property type="term" value="F:ATP binding"/>
    <property type="evidence" value="ECO:0007669"/>
    <property type="project" value="UniProtKB-UniRule"/>
</dbReference>
<dbReference type="GO" id="GO:0016887">
    <property type="term" value="F:ATP hydrolysis activity"/>
    <property type="evidence" value="ECO:0007669"/>
    <property type="project" value="InterPro"/>
</dbReference>
<dbReference type="GO" id="GO:0000400">
    <property type="term" value="F:four-way junction DNA binding"/>
    <property type="evidence" value="ECO:0007669"/>
    <property type="project" value="UniProtKB-UniRule"/>
</dbReference>
<dbReference type="GO" id="GO:0009378">
    <property type="term" value="F:four-way junction helicase activity"/>
    <property type="evidence" value="ECO:0007669"/>
    <property type="project" value="InterPro"/>
</dbReference>
<dbReference type="GO" id="GO:0006310">
    <property type="term" value="P:DNA recombination"/>
    <property type="evidence" value="ECO:0007669"/>
    <property type="project" value="UniProtKB-UniRule"/>
</dbReference>
<dbReference type="GO" id="GO:0006281">
    <property type="term" value="P:DNA repair"/>
    <property type="evidence" value="ECO:0007669"/>
    <property type="project" value="UniProtKB-UniRule"/>
</dbReference>
<dbReference type="CDD" id="cd00009">
    <property type="entry name" value="AAA"/>
    <property type="match status" value="1"/>
</dbReference>
<dbReference type="Gene3D" id="1.10.8.60">
    <property type="match status" value="1"/>
</dbReference>
<dbReference type="Gene3D" id="3.40.50.300">
    <property type="entry name" value="P-loop containing nucleotide triphosphate hydrolases"/>
    <property type="match status" value="1"/>
</dbReference>
<dbReference type="Gene3D" id="1.10.10.10">
    <property type="entry name" value="Winged helix-like DNA-binding domain superfamily/Winged helix DNA-binding domain"/>
    <property type="match status" value="1"/>
</dbReference>
<dbReference type="HAMAP" id="MF_00016">
    <property type="entry name" value="DNA_HJ_migration_RuvB"/>
    <property type="match status" value="1"/>
</dbReference>
<dbReference type="InterPro" id="IPR003593">
    <property type="entry name" value="AAA+_ATPase"/>
</dbReference>
<dbReference type="InterPro" id="IPR041445">
    <property type="entry name" value="AAA_lid_4"/>
</dbReference>
<dbReference type="InterPro" id="IPR004605">
    <property type="entry name" value="DNA_helicase_Holl-junc_RuvB"/>
</dbReference>
<dbReference type="InterPro" id="IPR027417">
    <property type="entry name" value="P-loop_NTPase"/>
</dbReference>
<dbReference type="InterPro" id="IPR008824">
    <property type="entry name" value="RuvB-like_N"/>
</dbReference>
<dbReference type="InterPro" id="IPR008823">
    <property type="entry name" value="RuvB_C"/>
</dbReference>
<dbReference type="InterPro" id="IPR036388">
    <property type="entry name" value="WH-like_DNA-bd_sf"/>
</dbReference>
<dbReference type="InterPro" id="IPR036390">
    <property type="entry name" value="WH_DNA-bd_sf"/>
</dbReference>
<dbReference type="NCBIfam" id="NF000868">
    <property type="entry name" value="PRK00080.1"/>
    <property type="match status" value="1"/>
</dbReference>
<dbReference type="NCBIfam" id="TIGR00635">
    <property type="entry name" value="ruvB"/>
    <property type="match status" value="1"/>
</dbReference>
<dbReference type="PANTHER" id="PTHR42848">
    <property type="match status" value="1"/>
</dbReference>
<dbReference type="PANTHER" id="PTHR42848:SF1">
    <property type="entry name" value="HOLLIDAY JUNCTION BRANCH MIGRATION COMPLEX SUBUNIT RUVB"/>
    <property type="match status" value="1"/>
</dbReference>
<dbReference type="Pfam" id="PF17864">
    <property type="entry name" value="AAA_lid_4"/>
    <property type="match status" value="1"/>
</dbReference>
<dbReference type="Pfam" id="PF05491">
    <property type="entry name" value="RuvB_C"/>
    <property type="match status" value="1"/>
</dbReference>
<dbReference type="Pfam" id="PF05496">
    <property type="entry name" value="RuvB_N"/>
    <property type="match status" value="1"/>
</dbReference>
<dbReference type="SMART" id="SM00382">
    <property type="entry name" value="AAA"/>
    <property type="match status" value="1"/>
</dbReference>
<dbReference type="SUPFAM" id="SSF52540">
    <property type="entry name" value="P-loop containing nucleoside triphosphate hydrolases"/>
    <property type="match status" value="1"/>
</dbReference>
<dbReference type="SUPFAM" id="SSF46785">
    <property type="entry name" value="Winged helix' DNA-binding domain"/>
    <property type="match status" value="1"/>
</dbReference>
<protein>
    <recommendedName>
        <fullName evidence="1">Holliday junction branch migration complex subunit RuvB</fullName>
        <ecNumber evidence="1">3.6.4.-</ecNumber>
    </recommendedName>
</protein>
<organism>
    <name type="scientific">Nocardioides sp. (strain ATCC BAA-499 / JS614)</name>
    <dbReference type="NCBI Taxonomy" id="196162"/>
    <lineage>
        <taxon>Bacteria</taxon>
        <taxon>Bacillati</taxon>
        <taxon>Actinomycetota</taxon>
        <taxon>Actinomycetes</taxon>
        <taxon>Propionibacteriales</taxon>
        <taxon>Nocardioidaceae</taxon>
        <taxon>Nocardioides</taxon>
    </lineage>
</organism>
<feature type="chain" id="PRO_0000322824" description="Holliday junction branch migration complex subunit RuvB">
    <location>
        <begin position="1"/>
        <end position="360"/>
    </location>
</feature>
<feature type="region of interest" description="Large ATPase domain (RuvB-L)" evidence="1">
    <location>
        <begin position="4"/>
        <end position="196"/>
    </location>
</feature>
<feature type="region of interest" description="Small ATPAse domain (RuvB-S)" evidence="1">
    <location>
        <begin position="197"/>
        <end position="267"/>
    </location>
</feature>
<feature type="region of interest" description="Head domain (RuvB-H)" evidence="1">
    <location>
        <begin position="270"/>
        <end position="360"/>
    </location>
</feature>
<feature type="binding site" evidence="1">
    <location>
        <position position="35"/>
    </location>
    <ligand>
        <name>ATP</name>
        <dbReference type="ChEBI" id="CHEBI:30616"/>
    </ligand>
</feature>
<feature type="binding site" evidence="1">
    <location>
        <position position="36"/>
    </location>
    <ligand>
        <name>ATP</name>
        <dbReference type="ChEBI" id="CHEBI:30616"/>
    </ligand>
</feature>
<feature type="binding site" evidence="1">
    <location>
        <position position="77"/>
    </location>
    <ligand>
        <name>ATP</name>
        <dbReference type="ChEBI" id="CHEBI:30616"/>
    </ligand>
</feature>
<feature type="binding site" evidence="1">
    <location>
        <position position="80"/>
    </location>
    <ligand>
        <name>ATP</name>
        <dbReference type="ChEBI" id="CHEBI:30616"/>
    </ligand>
</feature>
<feature type="binding site" evidence="1">
    <location>
        <position position="81"/>
    </location>
    <ligand>
        <name>ATP</name>
        <dbReference type="ChEBI" id="CHEBI:30616"/>
    </ligand>
</feature>
<feature type="binding site" evidence="1">
    <location>
        <position position="81"/>
    </location>
    <ligand>
        <name>Mg(2+)</name>
        <dbReference type="ChEBI" id="CHEBI:18420"/>
    </ligand>
</feature>
<feature type="binding site" evidence="1">
    <location>
        <position position="82"/>
    </location>
    <ligand>
        <name>ATP</name>
        <dbReference type="ChEBI" id="CHEBI:30616"/>
    </ligand>
</feature>
<feature type="binding site" evidence="1">
    <location>
        <begin position="143"/>
        <end position="145"/>
    </location>
    <ligand>
        <name>ATP</name>
        <dbReference type="ChEBI" id="CHEBI:30616"/>
    </ligand>
</feature>
<feature type="binding site" evidence="1">
    <location>
        <position position="186"/>
    </location>
    <ligand>
        <name>ATP</name>
        <dbReference type="ChEBI" id="CHEBI:30616"/>
    </ligand>
</feature>
<feature type="binding site" evidence="1">
    <location>
        <position position="196"/>
    </location>
    <ligand>
        <name>ATP</name>
        <dbReference type="ChEBI" id="CHEBI:30616"/>
    </ligand>
</feature>
<feature type="binding site" evidence="1">
    <location>
        <position position="233"/>
    </location>
    <ligand>
        <name>ATP</name>
        <dbReference type="ChEBI" id="CHEBI:30616"/>
    </ligand>
</feature>
<feature type="binding site" evidence="1">
    <location>
        <position position="306"/>
    </location>
    <ligand>
        <name>DNA</name>
        <dbReference type="ChEBI" id="CHEBI:16991"/>
    </ligand>
</feature>
<feature type="binding site" evidence="1">
    <location>
        <position position="325"/>
    </location>
    <ligand>
        <name>DNA</name>
        <dbReference type="ChEBI" id="CHEBI:16991"/>
    </ligand>
</feature>
<feature type="binding site" evidence="1">
    <location>
        <position position="330"/>
    </location>
    <ligand>
        <name>DNA</name>
        <dbReference type="ChEBI" id="CHEBI:16991"/>
    </ligand>
</feature>
<gene>
    <name evidence="1" type="primary">ruvB</name>
    <name type="ordered locus">Noca_2387</name>
</gene>
<sequence length="360" mass="39020">MTFHEEDLDQAEEVHVRSLTAAEADGDERAVEAALRPRTLDEVVGQVRVRDQLGLVLEAARRRGRAPDHVLLSGPPGLGKTTLAMIIASEMGAPLRLTSGPAITHAGDLAAILSGMNEGDVLFVDEIHRMSRPAEEMLYMAMEDFRVDVVIGKGPGATAIPLEIPPFTLVGATTRAGLLPGPLRDRFGFTAHLEFYEPDELDLIVQRSARLLDVHVLPDGTAEIASRSRGTPRIANRLLRRVRDFAQVRADGVVTLPVAQDALDLYEVDQLGLDRLDRGVLDVLCRRFGGGPVGISTLAVAVGEERETVEEVAEPFLVRNGFLARTPRGRVATPAAWEHLGLTAPPTLTLPESDPPLFED</sequence>
<keyword id="KW-0067">ATP-binding</keyword>
<keyword id="KW-0963">Cytoplasm</keyword>
<keyword id="KW-0227">DNA damage</keyword>
<keyword id="KW-0233">DNA recombination</keyword>
<keyword id="KW-0234">DNA repair</keyword>
<keyword id="KW-0238">DNA-binding</keyword>
<keyword id="KW-0378">Hydrolase</keyword>
<keyword id="KW-0547">Nucleotide-binding</keyword>
<keyword id="KW-1185">Reference proteome</keyword>